<proteinExistence type="inferred from homology"/>
<dbReference type="EMBL" id="AB065890">
    <property type="protein sequence ID" value="BAC45262.1"/>
    <property type="molecule type" value="Genomic_DNA"/>
</dbReference>
<dbReference type="EMBL" id="BK004451">
    <property type="protein sequence ID" value="DAA04849.1"/>
    <property type="molecule type" value="Genomic_DNA"/>
</dbReference>
<dbReference type="CCDS" id="CCDS32031.1"/>
<dbReference type="RefSeq" id="NP_001004724.1">
    <property type="nucleotide sequence ID" value="NM_001004724.2"/>
</dbReference>
<dbReference type="SMR" id="Q8IXE1"/>
<dbReference type="BioGRID" id="133564">
    <property type="interactions" value="1"/>
</dbReference>
<dbReference type="FunCoup" id="Q8IXE1">
    <property type="interactions" value="417"/>
</dbReference>
<dbReference type="IntAct" id="Q8IXE1">
    <property type="interactions" value="1"/>
</dbReference>
<dbReference type="STRING" id="9606.ENSP00000493307"/>
<dbReference type="GlyCosmos" id="Q8IXE1">
    <property type="glycosylation" value="1 site, No reported glycans"/>
</dbReference>
<dbReference type="GlyGen" id="Q8IXE1">
    <property type="glycosylation" value="1 site"/>
</dbReference>
<dbReference type="iPTMnet" id="Q8IXE1"/>
<dbReference type="PhosphoSitePlus" id="Q8IXE1"/>
<dbReference type="BioMuta" id="OR4N5"/>
<dbReference type="DMDM" id="37081339"/>
<dbReference type="PaxDb" id="9606-ENSP00000332110"/>
<dbReference type="ProteomicsDB" id="70983"/>
<dbReference type="Antibodypedia" id="70558">
    <property type="antibodies" value="20 antibodies from 13 providers"/>
</dbReference>
<dbReference type="DNASU" id="390437"/>
<dbReference type="Ensembl" id="ENST00000641086.1">
    <property type="protein sequence ID" value="ENSP00000493307.1"/>
    <property type="gene ID" value="ENSG00000184394.3"/>
</dbReference>
<dbReference type="Ensembl" id="ENST00000708843.1">
    <property type="protein sequence ID" value="ENSP00000517374.1"/>
    <property type="gene ID" value="ENSG00000291808.1"/>
</dbReference>
<dbReference type="GeneID" id="390437"/>
<dbReference type="KEGG" id="hsa:390437"/>
<dbReference type="MANE-Select" id="ENST00000641086.1">
    <property type="protein sequence ID" value="ENSP00000493307.1"/>
    <property type="RefSeq nucleotide sequence ID" value="NM_001004724.2"/>
    <property type="RefSeq protein sequence ID" value="NP_001004724.1"/>
</dbReference>
<dbReference type="UCSC" id="uc010tla.2">
    <property type="organism name" value="human"/>
</dbReference>
<dbReference type="AGR" id="HGNC:15358"/>
<dbReference type="CTD" id="390437"/>
<dbReference type="GeneCards" id="OR4N5"/>
<dbReference type="HGNC" id="HGNC:15358">
    <property type="gene designation" value="OR4N5"/>
</dbReference>
<dbReference type="HPA" id="ENSG00000184394">
    <property type="expression patterns" value="Not detected"/>
</dbReference>
<dbReference type="neXtProt" id="NX_Q8IXE1"/>
<dbReference type="PharmGKB" id="PA32333"/>
<dbReference type="VEuPathDB" id="HostDB:ENSG00000184394"/>
<dbReference type="eggNOG" id="ENOG502SKDS">
    <property type="taxonomic scope" value="Eukaryota"/>
</dbReference>
<dbReference type="GeneTree" id="ENSGT00940000162920"/>
<dbReference type="HOGENOM" id="CLU_012526_8_1_1"/>
<dbReference type="InParanoid" id="Q8IXE1"/>
<dbReference type="OMA" id="YAVILYH"/>
<dbReference type="OrthoDB" id="6130476at2759"/>
<dbReference type="PAN-GO" id="Q8IXE1">
    <property type="GO annotations" value="2 GO annotations based on evolutionary models"/>
</dbReference>
<dbReference type="PhylomeDB" id="Q8IXE1"/>
<dbReference type="TreeFam" id="TF338273"/>
<dbReference type="PathwayCommons" id="Q8IXE1"/>
<dbReference type="Reactome" id="R-HSA-9752946">
    <property type="pathway name" value="Expression and translocation of olfactory receptors"/>
</dbReference>
<dbReference type="SignaLink" id="Q8IXE1"/>
<dbReference type="BioGRID-ORCS" id="390437">
    <property type="hits" value="3 hits in 743 CRISPR screens"/>
</dbReference>
<dbReference type="ChiTaRS" id="OR4N5">
    <property type="organism name" value="human"/>
</dbReference>
<dbReference type="GeneWiki" id="OR4N5"/>
<dbReference type="GenomeRNAi" id="390437"/>
<dbReference type="Pharos" id="Q8IXE1">
    <property type="development level" value="Tdark"/>
</dbReference>
<dbReference type="PRO" id="PR:Q8IXE1"/>
<dbReference type="Proteomes" id="UP000005640">
    <property type="component" value="Chromosome 14"/>
</dbReference>
<dbReference type="RNAct" id="Q8IXE1">
    <property type="molecule type" value="protein"/>
</dbReference>
<dbReference type="Bgee" id="ENSG00000184394">
    <property type="expression patterns" value="Expressed in male germ line stem cell (sensu Vertebrata) in testis"/>
</dbReference>
<dbReference type="ExpressionAtlas" id="Q8IXE1">
    <property type="expression patterns" value="baseline and differential"/>
</dbReference>
<dbReference type="GO" id="GO:0005886">
    <property type="term" value="C:plasma membrane"/>
    <property type="evidence" value="ECO:0000318"/>
    <property type="project" value="GO_Central"/>
</dbReference>
<dbReference type="GO" id="GO:0004930">
    <property type="term" value="F:G protein-coupled receptor activity"/>
    <property type="evidence" value="ECO:0007669"/>
    <property type="project" value="UniProtKB-KW"/>
</dbReference>
<dbReference type="GO" id="GO:0004984">
    <property type="term" value="F:olfactory receptor activity"/>
    <property type="evidence" value="ECO:0000318"/>
    <property type="project" value="GO_Central"/>
</dbReference>
<dbReference type="CDD" id="cd15937">
    <property type="entry name" value="7tmA_OR4N-like"/>
    <property type="match status" value="1"/>
</dbReference>
<dbReference type="FunFam" id="1.20.1070.10:FF:000007">
    <property type="entry name" value="Olfactory receptor"/>
    <property type="match status" value="1"/>
</dbReference>
<dbReference type="Gene3D" id="1.20.1070.10">
    <property type="entry name" value="Rhodopsin 7-helix transmembrane proteins"/>
    <property type="match status" value="1"/>
</dbReference>
<dbReference type="InterPro" id="IPR000276">
    <property type="entry name" value="GPCR_Rhodpsn"/>
</dbReference>
<dbReference type="InterPro" id="IPR017452">
    <property type="entry name" value="GPCR_Rhodpsn_7TM"/>
</dbReference>
<dbReference type="InterPro" id="IPR000725">
    <property type="entry name" value="Olfact_rcpt"/>
</dbReference>
<dbReference type="InterPro" id="IPR050427">
    <property type="entry name" value="Olfactory_Receptors"/>
</dbReference>
<dbReference type="PANTHER" id="PTHR48002">
    <property type="entry name" value="OLFACTORY RECEPTOR"/>
    <property type="match status" value="1"/>
</dbReference>
<dbReference type="Pfam" id="PF13853">
    <property type="entry name" value="7tm_4"/>
    <property type="match status" value="1"/>
</dbReference>
<dbReference type="PRINTS" id="PR00237">
    <property type="entry name" value="GPCRRHODOPSN"/>
</dbReference>
<dbReference type="PRINTS" id="PR00245">
    <property type="entry name" value="OLFACTORYR"/>
</dbReference>
<dbReference type="SUPFAM" id="SSF81321">
    <property type="entry name" value="Family A G protein-coupled receptor-like"/>
    <property type="match status" value="1"/>
</dbReference>
<dbReference type="PROSITE" id="PS00237">
    <property type="entry name" value="G_PROTEIN_RECEP_F1_1"/>
    <property type="match status" value="1"/>
</dbReference>
<dbReference type="PROSITE" id="PS50262">
    <property type="entry name" value="G_PROTEIN_RECEP_F1_2"/>
    <property type="match status" value="1"/>
</dbReference>
<comment type="function">
    <text evidence="3">Odorant receptor.</text>
</comment>
<comment type="subcellular location">
    <subcellularLocation>
        <location>Cell membrane</location>
        <topology>Multi-pass membrane protein</topology>
    </subcellularLocation>
</comment>
<comment type="similarity">
    <text evidence="2">Belongs to the G-protein coupled receptor 1 family.</text>
</comment>
<comment type="online information" name="Human Olfactory Receptor Data Exploratorium (HORDE)">
    <link uri="http://genome.weizmann.ac.il/horde/card/index/symbol:OR4N5"/>
</comment>
<name>OR4N5_HUMAN</name>
<reference key="1">
    <citation type="submission" date="2001-07" db="EMBL/GenBank/DDBJ databases">
        <title>Genome-wide discovery and analysis of human seven transmembrane helix receptor genes.</title>
        <authorList>
            <person name="Suwa M."/>
            <person name="Sato T."/>
            <person name="Okouchi I."/>
            <person name="Arita M."/>
            <person name="Futami K."/>
            <person name="Matsumoto S."/>
            <person name="Tsutsumi S."/>
            <person name="Aburatani H."/>
            <person name="Asai K."/>
            <person name="Akiyama Y."/>
        </authorList>
    </citation>
    <scope>NUCLEOTIDE SEQUENCE [GENOMIC DNA]</scope>
</reference>
<reference key="2">
    <citation type="journal article" date="2004" name="Proc. Natl. Acad. Sci. U.S.A.">
        <title>The human olfactory receptor gene family.</title>
        <authorList>
            <person name="Malnic B."/>
            <person name="Godfrey P.A."/>
            <person name="Buck L.B."/>
        </authorList>
    </citation>
    <scope>IDENTIFICATION</scope>
</reference>
<reference key="3">
    <citation type="journal article" date="2004" name="Proc. Natl. Acad. Sci. U.S.A.">
        <authorList>
            <person name="Malnic B."/>
            <person name="Godfrey P.A."/>
            <person name="Buck L.B."/>
        </authorList>
    </citation>
    <scope>ERRATUM OF PUBMED:14983052</scope>
</reference>
<keyword id="KW-1003">Cell membrane</keyword>
<keyword id="KW-1015">Disulfide bond</keyword>
<keyword id="KW-0297">G-protein coupled receptor</keyword>
<keyword id="KW-0325">Glycoprotein</keyword>
<keyword id="KW-0472">Membrane</keyword>
<keyword id="KW-0552">Olfaction</keyword>
<keyword id="KW-0675">Receptor</keyword>
<keyword id="KW-1185">Reference proteome</keyword>
<keyword id="KW-0716">Sensory transduction</keyword>
<keyword id="KW-0807">Transducer</keyword>
<keyword id="KW-0812">Transmembrane</keyword>
<keyword id="KW-1133">Transmembrane helix</keyword>
<accession>Q8IXE1</accession>
<accession>Q6IF11</accession>
<feature type="chain" id="PRO_0000150565" description="Olfactory receptor 4N5">
    <location>
        <begin position="1"/>
        <end position="308"/>
    </location>
</feature>
<feature type="topological domain" description="Extracellular" evidence="1">
    <location>
        <begin position="1"/>
        <end position="25"/>
    </location>
</feature>
<feature type="transmembrane region" description="Helical; Name=1" evidence="1">
    <location>
        <begin position="26"/>
        <end position="49"/>
    </location>
</feature>
<feature type="topological domain" description="Cytoplasmic" evidence="1">
    <location>
        <begin position="50"/>
        <end position="57"/>
    </location>
</feature>
<feature type="transmembrane region" description="Helical; Name=2" evidence="1">
    <location>
        <begin position="58"/>
        <end position="79"/>
    </location>
</feature>
<feature type="topological domain" description="Extracellular" evidence="1">
    <location>
        <begin position="80"/>
        <end position="100"/>
    </location>
</feature>
<feature type="transmembrane region" description="Helical; Name=3" evidence="1">
    <location>
        <begin position="101"/>
        <end position="120"/>
    </location>
</feature>
<feature type="topological domain" description="Cytoplasmic" evidence="1">
    <location>
        <begin position="121"/>
        <end position="139"/>
    </location>
</feature>
<feature type="transmembrane region" description="Helical; Name=4" evidence="1">
    <location>
        <begin position="140"/>
        <end position="158"/>
    </location>
</feature>
<feature type="topological domain" description="Extracellular" evidence="1">
    <location>
        <begin position="159"/>
        <end position="195"/>
    </location>
</feature>
<feature type="transmembrane region" description="Helical; Name=5" evidence="1">
    <location>
        <begin position="196"/>
        <end position="219"/>
    </location>
</feature>
<feature type="topological domain" description="Cytoplasmic" evidence="1">
    <location>
        <begin position="220"/>
        <end position="235"/>
    </location>
</feature>
<feature type="transmembrane region" description="Helical; Name=6" evidence="1">
    <location>
        <begin position="236"/>
        <end position="258"/>
    </location>
</feature>
<feature type="topological domain" description="Extracellular" evidence="1">
    <location>
        <begin position="259"/>
        <end position="269"/>
    </location>
</feature>
<feature type="transmembrane region" description="Helical; Name=7" evidence="1">
    <location>
        <begin position="270"/>
        <end position="289"/>
    </location>
</feature>
<feature type="topological domain" description="Cytoplasmic" evidence="1">
    <location>
        <begin position="290"/>
        <end position="308"/>
    </location>
</feature>
<feature type="glycosylation site" description="N-linked (GlcNAc...) asparagine" evidence="1">
    <location>
        <position position="5"/>
    </location>
</feature>
<feature type="disulfide bond" evidence="2">
    <location>
        <begin position="97"/>
        <end position="189"/>
    </location>
</feature>
<feature type="sequence variant" id="VAR_024095" description="In dbSNP:rs10131326.">
    <original>N</original>
    <variation>D</variation>
    <location>
        <position position="191"/>
    </location>
</feature>
<feature type="sequence variant" id="VAR_034208" description="In dbSNP:rs10140908.">
    <original>S</original>
    <variation>T</variation>
    <location>
        <position position="234"/>
    </location>
</feature>
<feature type="sequence variant" id="VAR_034209" description="In dbSNP:rs10134472.">
    <original>C</original>
    <variation>R</variation>
    <location>
        <position position="260"/>
    </location>
</feature>
<feature type="sequence variant" id="VAR_053175" description="In dbSNP:rs10141025.">
    <original>R</original>
    <variation>H</variation>
    <location>
        <position position="290"/>
    </location>
</feature>
<protein>
    <recommendedName>
        <fullName>Olfactory receptor 4N5</fullName>
    </recommendedName>
    <alternativeName>
        <fullName>Olfactory receptor OR14-33</fullName>
    </alternativeName>
</protein>
<evidence type="ECO:0000255" key="1"/>
<evidence type="ECO:0000255" key="2">
    <source>
        <dbReference type="PROSITE-ProRule" id="PRU00521"/>
    </source>
</evidence>
<evidence type="ECO:0000305" key="3"/>
<sequence length="308" mass="34696">METQNLTVVTEFILLGLTQSQDAQLLVFVLVLIFYLIILPGNFLIIFTIKSDPGLTAPLYFFLGNLALLDASYSFIVVPRMLVDFLSEKKVISYRSCITQLFFLHFLGAGEMFLLVVMAFDRYIAICRPLHYSTIMNPRACYALSLVLWLGGFIHSIVQVALILHLPFCGPNQLDNFFCDVPQVIKLACTNTFVVELLMVSNSGLLSLLCFLGLLASYAVILCRIREHSSEGKSKAISTCTTHIIIIFLMFGPAIFIYTCPFQAFPADKVVSLFHTVIFPLMNPVIYTLRNQEVKASMRKLLSQHMFC</sequence>
<gene>
    <name type="primary">OR4N5</name>
</gene>
<organism>
    <name type="scientific">Homo sapiens</name>
    <name type="common">Human</name>
    <dbReference type="NCBI Taxonomy" id="9606"/>
    <lineage>
        <taxon>Eukaryota</taxon>
        <taxon>Metazoa</taxon>
        <taxon>Chordata</taxon>
        <taxon>Craniata</taxon>
        <taxon>Vertebrata</taxon>
        <taxon>Euteleostomi</taxon>
        <taxon>Mammalia</taxon>
        <taxon>Eutheria</taxon>
        <taxon>Euarchontoglires</taxon>
        <taxon>Primates</taxon>
        <taxon>Haplorrhini</taxon>
        <taxon>Catarrhini</taxon>
        <taxon>Hominidae</taxon>
        <taxon>Homo</taxon>
    </lineage>
</organism>